<comment type="catalytic activity">
    <reaction evidence="4">
        <text>S-ubiquitinyl-[E2 ubiquitin-conjugating enzyme]-L-cysteine + [acceptor protein]-L-lysine = [E2 ubiquitin-conjugating enzyme]-L-cysteine + N(6)-ubiquitinyl-[acceptor protein]-L-lysine.</text>
        <dbReference type="EC" id="2.3.2.27"/>
    </reaction>
</comment>
<comment type="pathway">
    <text>Protein modification; protein ubiquitination.</text>
</comment>
<comment type="subcellular location">
    <subcellularLocation>
        <location evidence="4">Membrane</location>
        <topology evidence="4">Single-pass membrane protein</topology>
    </subcellularLocation>
</comment>
<comment type="domain">
    <text evidence="1">The RING-type zinc finger domain mediates binding to an E2 ubiquitin-conjugating enzyme.</text>
</comment>
<comment type="similarity">
    <text evidence="4">Belongs to the RING-type zinc finger family. ATL subfamily.</text>
</comment>
<comment type="caution">
    <text evidence="4">Lacks one cysteine (here Phe-106), present in the RING domain, which is one of the conserved features of the RING-type zinc finger family.</text>
</comment>
<comment type="caution">
    <text evidence="4">Could be the product of a pseudogene.</text>
</comment>
<protein>
    <recommendedName>
        <fullName>Putative RING-H2 finger protein ATL62</fullName>
        <ecNumber evidence="4">2.3.2.27</ecNumber>
    </recommendedName>
    <alternativeName>
        <fullName evidence="4">RING-type E3 ubiquitin transferase ATL62</fullName>
    </alternativeName>
</protein>
<evidence type="ECO:0000250" key="1"/>
<evidence type="ECO:0000255" key="2"/>
<evidence type="ECO:0000255" key="3">
    <source>
        <dbReference type="PROSITE-ProRule" id="PRU00175"/>
    </source>
</evidence>
<evidence type="ECO:0000305" key="4"/>
<accession>Q9LJL6</accession>
<accession>Q4FE36</accession>
<feature type="chain" id="PRO_0000055793" description="Putative RING-H2 finger protein ATL62">
    <location>
        <begin position="1"/>
        <end position="141"/>
    </location>
</feature>
<feature type="transmembrane region" description="Helical" evidence="2">
    <location>
        <begin position="14"/>
        <end position="32"/>
    </location>
</feature>
<feature type="zinc finger region" description="RING-type; degenerate" evidence="3">
    <location>
        <begin position="79"/>
        <end position="121"/>
    </location>
</feature>
<gene>
    <name type="primary">ATL62</name>
    <name type="ordered locus">At3g19140</name>
    <name type="ORF">MVI11.4</name>
</gene>
<keyword id="KW-0472">Membrane</keyword>
<keyword id="KW-0479">Metal-binding</keyword>
<keyword id="KW-1185">Reference proteome</keyword>
<keyword id="KW-0808">Transferase</keyword>
<keyword id="KW-0812">Transmembrane</keyword>
<keyword id="KW-1133">Transmembrane helix</keyword>
<keyword id="KW-0833">Ubl conjugation pathway</keyword>
<keyword id="KW-0862">Zinc</keyword>
<keyword id="KW-0863">Zinc-finger</keyword>
<dbReference type="EC" id="2.3.2.27" evidence="4"/>
<dbReference type="EMBL" id="DQ086855">
    <property type="protein sequence ID" value="AAZ14059.1"/>
    <property type="molecule type" value="Genomic_DNA"/>
</dbReference>
<dbReference type="EMBL" id="AP000419">
    <property type="protein sequence ID" value="BAB02954.1"/>
    <property type="molecule type" value="Genomic_DNA"/>
</dbReference>
<dbReference type="EMBL" id="CP002686">
    <property type="protein sequence ID" value="AEE76197.1"/>
    <property type="molecule type" value="Genomic_DNA"/>
</dbReference>
<dbReference type="SMR" id="Q9LJL6"/>
<dbReference type="BioGRID" id="6781">
    <property type="interactions" value="1"/>
</dbReference>
<dbReference type="STRING" id="3702.Q9LJL6"/>
<dbReference type="PaxDb" id="3702-AT3G19140.1"/>
<dbReference type="EnsemblPlants" id="AT3G19140.1">
    <property type="protein sequence ID" value="AT3G19140.1"/>
    <property type="gene ID" value="AT3G19140"/>
</dbReference>
<dbReference type="Gramene" id="AT3G19140.1">
    <property type="protein sequence ID" value="AT3G19140.1"/>
    <property type="gene ID" value="AT3G19140"/>
</dbReference>
<dbReference type="KEGG" id="ath:AT3G19140"/>
<dbReference type="Araport" id="AT3G19140"/>
<dbReference type="TAIR" id="AT3G19140">
    <property type="gene designation" value="DNF"/>
</dbReference>
<dbReference type="eggNOG" id="KOG0800">
    <property type="taxonomic scope" value="Eukaryota"/>
</dbReference>
<dbReference type="HOGENOM" id="CLU_152165_0_0_1"/>
<dbReference type="InParanoid" id="Q9LJL6"/>
<dbReference type="OMA" id="LVRNSHC"/>
<dbReference type="PhylomeDB" id="Q9LJL6"/>
<dbReference type="UniPathway" id="UPA00143"/>
<dbReference type="Proteomes" id="UP000006548">
    <property type="component" value="Chromosome 3"/>
</dbReference>
<dbReference type="ExpressionAtlas" id="Q9LJL6">
    <property type="expression patterns" value="differential"/>
</dbReference>
<dbReference type="GO" id="GO:0005886">
    <property type="term" value="C:plasma membrane"/>
    <property type="evidence" value="ECO:0000314"/>
    <property type="project" value="TAIR"/>
</dbReference>
<dbReference type="GO" id="GO:0004842">
    <property type="term" value="F:ubiquitin-protein transferase activity"/>
    <property type="evidence" value="ECO:0000314"/>
    <property type="project" value="TAIR"/>
</dbReference>
<dbReference type="GO" id="GO:0008270">
    <property type="term" value="F:zinc ion binding"/>
    <property type="evidence" value="ECO:0007669"/>
    <property type="project" value="UniProtKB-KW"/>
</dbReference>
<dbReference type="GO" id="GO:0048577">
    <property type="term" value="P:negative regulation of short-day photoperiodism, flowering"/>
    <property type="evidence" value="ECO:0000315"/>
    <property type="project" value="TAIR"/>
</dbReference>
<dbReference type="GO" id="GO:0016567">
    <property type="term" value="P:protein ubiquitination"/>
    <property type="evidence" value="ECO:0007669"/>
    <property type="project" value="UniProtKB-UniPathway"/>
</dbReference>
<dbReference type="Gene3D" id="3.30.40.10">
    <property type="entry name" value="Zinc/RING finger domain, C3HC4 (zinc finger)"/>
    <property type="match status" value="1"/>
</dbReference>
<dbReference type="InterPro" id="IPR044602">
    <property type="entry name" value="ATL10/ATL72-79-like"/>
</dbReference>
<dbReference type="InterPro" id="IPR001841">
    <property type="entry name" value="Znf_RING"/>
</dbReference>
<dbReference type="InterPro" id="IPR013083">
    <property type="entry name" value="Znf_RING/FYVE/PHD"/>
</dbReference>
<dbReference type="PANTHER" id="PTHR46905">
    <property type="entry name" value="RING-H2 FINGER PROTEIN ATL78"/>
    <property type="match status" value="1"/>
</dbReference>
<dbReference type="PANTHER" id="PTHR46905:SF7">
    <property type="entry name" value="RING-H2 FINGER PROTEIN ATL78"/>
    <property type="match status" value="1"/>
</dbReference>
<dbReference type="Pfam" id="PF13639">
    <property type="entry name" value="zf-RING_2"/>
    <property type="match status" value="1"/>
</dbReference>
<dbReference type="SUPFAM" id="SSF57850">
    <property type="entry name" value="RING/U-box"/>
    <property type="match status" value="1"/>
</dbReference>
<dbReference type="PROSITE" id="PS50089">
    <property type="entry name" value="ZF_RING_2"/>
    <property type="match status" value="1"/>
</dbReference>
<proteinExistence type="uncertain"/>
<sequence>MNEDALEAVRSRTFFAILTVFYSIFRCCLAYCNKGDDDHLIHPSHSLHVIKATGINPSVLLSIPVVSFNANAFKDNIECVVCLSKFIDEDKARVLPSCNHCFHFDFTDTWLHSDYTCPNCRKNVEEIQNHELSLSPNPNSG</sequence>
<organism>
    <name type="scientific">Arabidopsis thaliana</name>
    <name type="common">Mouse-ear cress</name>
    <dbReference type="NCBI Taxonomy" id="3702"/>
    <lineage>
        <taxon>Eukaryota</taxon>
        <taxon>Viridiplantae</taxon>
        <taxon>Streptophyta</taxon>
        <taxon>Embryophyta</taxon>
        <taxon>Tracheophyta</taxon>
        <taxon>Spermatophyta</taxon>
        <taxon>Magnoliopsida</taxon>
        <taxon>eudicotyledons</taxon>
        <taxon>Gunneridae</taxon>
        <taxon>Pentapetalae</taxon>
        <taxon>rosids</taxon>
        <taxon>malvids</taxon>
        <taxon>Brassicales</taxon>
        <taxon>Brassicaceae</taxon>
        <taxon>Camelineae</taxon>
        <taxon>Arabidopsis</taxon>
    </lineage>
</organism>
<name>ATL62_ARATH</name>
<reference key="1">
    <citation type="journal article" date="2005" name="Plant Physiol.">
        <title>Functional analysis of the RING-type ubiquitin ligase family of Arabidopsis.</title>
        <authorList>
            <person name="Stone S.L."/>
            <person name="Hauksdottir H."/>
            <person name="Troy A."/>
            <person name="Herschleb J."/>
            <person name="Kraft E."/>
            <person name="Callis J."/>
        </authorList>
    </citation>
    <scope>NUCLEOTIDE SEQUENCE [GENOMIC DNA]</scope>
    <source>
        <strain>cv. Columbia</strain>
        <tissue>Leaf</tissue>
    </source>
</reference>
<reference key="2">
    <citation type="journal article" date="2000" name="DNA Res.">
        <title>Structural analysis of Arabidopsis thaliana chromosome 3. II. Sequence features of the 4,251,695 bp regions covered by 90 P1, TAC and BAC clones.</title>
        <authorList>
            <person name="Kaneko T."/>
            <person name="Katoh T."/>
            <person name="Sato S."/>
            <person name="Nakamura Y."/>
            <person name="Asamizu E."/>
            <person name="Tabata S."/>
        </authorList>
    </citation>
    <scope>NUCLEOTIDE SEQUENCE [LARGE SCALE GENOMIC DNA]</scope>
    <source>
        <strain>cv. Columbia</strain>
    </source>
</reference>
<reference key="3">
    <citation type="journal article" date="2017" name="Plant J.">
        <title>Araport11: a complete reannotation of the Arabidopsis thaliana reference genome.</title>
        <authorList>
            <person name="Cheng C.Y."/>
            <person name="Krishnakumar V."/>
            <person name="Chan A.P."/>
            <person name="Thibaud-Nissen F."/>
            <person name="Schobel S."/>
            <person name="Town C.D."/>
        </authorList>
    </citation>
    <scope>GENOME REANNOTATION</scope>
    <source>
        <strain>cv. Columbia</strain>
    </source>
</reference>
<reference key="4">
    <citation type="journal article" date="2002" name="Genome Biol.">
        <title>Evaluation and classification of RING-finger domains encoded by the Arabidopsis genome.</title>
        <authorList>
            <person name="Kosarev P."/>
            <person name="Mayer K.F.X."/>
            <person name="Hardtke C.S."/>
        </authorList>
    </citation>
    <scope>GENE FAMILY ORGANIZATION</scope>
</reference>
<reference key="5">
    <citation type="journal article" date="2006" name="J. Mol. Evol.">
        <title>The ATL gene family from Arabidopsis thaliana and Oryza sativa comprises a large number of putative ubiquitin ligases of the RING-H2 type.</title>
        <authorList>
            <person name="Serrano M."/>
            <person name="Parra S."/>
            <person name="Alcaraz L.D."/>
            <person name="Guzman P."/>
        </authorList>
    </citation>
    <scope>NOMENCLATURE</scope>
    <scope>GENE FAMILY ORGANIZATION</scope>
</reference>